<comment type="catalytic activity">
    <reaction evidence="1">
        <text>a quinone + NADH + H(+) = a quinol + NAD(+)</text>
        <dbReference type="Rhea" id="RHEA:46160"/>
        <dbReference type="ChEBI" id="CHEBI:15378"/>
        <dbReference type="ChEBI" id="CHEBI:24646"/>
        <dbReference type="ChEBI" id="CHEBI:57540"/>
        <dbReference type="ChEBI" id="CHEBI:57945"/>
        <dbReference type="ChEBI" id="CHEBI:132124"/>
        <dbReference type="EC" id="1.6.5.2"/>
    </reaction>
</comment>
<comment type="catalytic activity">
    <reaction evidence="1">
        <text>a quinone + NADPH + H(+) = a quinol + NADP(+)</text>
        <dbReference type="Rhea" id="RHEA:46164"/>
        <dbReference type="ChEBI" id="CHEBI:15378"/>
        <dbReference type="ChEBI" id="CHEBI:24646"/>
        <dbReference type="ChEBI" id="CHEBI:57783"/>
        <dbReference type="ChEBI" id="CHEBI:58349"/>
        <dbReference type="ChEBI" id="CHEBI:132124"/>
        <dbReference type="EC" id="1.6.5.2"/>
    </reaction>
</comment>
<comment type="cofactor">
    <cofactor evidence="1">
        <name>FMN</name>
        <dbReference type="ChEBI" id="CHEBI:58210"/>
    </cofactor>
    <text evidence="1">Binds 1 FMN per monomer.</text>
</comment>
<comment type="similarity">
    <text evidence="1">Belongs to the WrbA family.</text>
</comment>
<evidence type="ECO:0000255" key="1">
    <source>
        <dbReference type="HAMAP-Rule" id="MF_01017"/>
    </source>
</evidence>
<organism>
    <name type="scientific">Escherichia coli O127:H6 (strain E2348/69 / EPEC)</name>
    <dbReference type="NCBI Taxonomy" id="574521"/>
    <lineage>
        <taxon>Bacteria</taxon>
        <taxon>Pseudomonadati</taxon>
        <taxon>Pseudomonadota</taxon>
        <taxon>Gammaproteobacteria</taxon>
        <taxon>Enterobacterales</taxon>
        <taxon>Enterobacteriaceae</taxon>
        <taxon>Escherichia</taxon>
    </lineage>
</organism>
<name>NQOR_ECO27</name>
<feature type="chain" id="PRO_1000149008" description="NAD(P)H dehydrogenase (quinone)">
    <location>
        <begin position="1"/>
        <end position="198"/>
    </location>
</feature>
<feature type="domain" description="Flavodoxin-like" evidence="1">
    <location>
        <begin position="4"/>
        <end position="189"/>
    </location>
</feature>
<feature type="binding site" evidence="1">
    <location>
        <begin position="10"/>
        <end position="15"/>
    </location>
    <ligand>
        <name>FMN</name>
        <dbReference type="ChEBI" id="CHEBI:58210"/>
    </ligand>
</feature>
<feature type="binding site" evidence="1">
    <location>
        <position position="12"/>
    </location>
    <ligand>
        <name>NAD(+)</name>
        <dbReference type="ChEBI" id="CHEBI:57540"/>
    </ligand>
</feature>
<feature type="binding site" evidence="1">
    <location>
        <begin position="78"/>
        <end position="80"/>
    </location>
    <ligand>
        <name>FMN</name>
        <dbReference type="ChEBI" id="CHEBI:58210"/>
    </ligand>
</feature>
<feature type="binding site" evidence="1">
    <location>
        <position position="98"/>
    </location>
    <ligand>
        <name>substrate</name>
    </ligand>
</feature>
<feature type="binding site" evidence="1">
    <location>
        <begin position="113"/>
        <end position="118"/>
    </location>
    <ligand>
        <name>FMN</name>
        <dbReference type="ChEBI" id="CHEBI:58210"/>
    </ligand>
</feature>
<feature type="binding site" evidence="1">
    <location>
        <position position="133"/>
    </location>
    <ligand>
        <name>FMN</name>
        <dbReference type="ChEBI" id="CHEBI:58210"/>
    </ligand>
</feature>
<sequence length="198" mass="20846">MAKVLVLYYSMYGHIETMARAVAEGASKVDGAEVVVKRVPETMPPQLFEKAGGKTQTAPVATPQELADYDAIIFGTPTRFGNMSGQMRTFLDQTGGLWASGALYGKLASVFSSTGTGGGQEQTITSTWTTLAHHGMVIVPIGYAAQELFDVSQVRGGTPYGATTIAGGDGSRQPSQEELSIARYQGEYVAGLAVKLNG</sequence>
<keyword id="KW-0285">Flavoprotein</keyword>
<keyword id="KW-0288">FMN</keyword>
<keyword id="KW-0520">NAD</keyword>
<keyword id="KW-0521">NADP</keyword>
<keyword id="KW-0547">Nucleotide-binding</keyword>
<keyword id="KW-0560">Oxidoreductase</keyword>
<keyword id="KW-1185">Reference proteome</keyword>
<protein>
    <recommendedName>
        <fullName evidence="1">NAD(P)H dehydrogenase (quinone)</fullName>
        <ecNumber evidence="1">1.6.5.2</ecNumber>
    </recommendedName>
    <alternativeName>
        <fullName>Flavoprotein WrbA</fullName>
    </alternativeName>
    <alternativeName>
        <fullName evidence="1">NAD(P)H:quinone oxidoreductase</fullName>
        <shortName evidence="1">NQO</shortName>
    </alternativeName>
</protein>
<dbReference type="EC" id="1.6.5.2" evidence="1"/>
<dbReference type="EMBL" id="FM180568">
    <property type="protein sequence ID" value="CAS08603.1"/>
    <property type="molecule type" value="Genomic_DNA"/>
</dbReference>
<dbReference type="SMR" id="B7UNY7"/>
<dbReference type="KEGG" id="ecg:E2348C_1055"/>
<dbReference type="HOGENOM" id="CLU_051402_0_2_6"/>
<dbReference type="Proteomes" id="UP000008205">
    <property type="component" value="Chromosome"/>
</dbReference>
<dbReference type="GO" id="GO:0016020">
    <property type="term" value="C:membrane"/>
    <property type="evidence" value="ECO:0007669"/>
    <property type="project" value="TreeGrafter"/>
</dbReference>
<dbReference type="GO" id="GO:0050660">
    <property type="term" value="F:flavin adenine dinucleotide binding"/>
    <property type="evidence" value="ECO:0007669"/>
    <property type="project" value="UniProtKB-UniRule"/>
</dbReference>
<dbReference type="GO" id="GO:0010181">
    <property type="term" value="F:FMN binding"/>
    <property type="evidence" value="ECO:0007669"/>
    <property type="project" value="InterPro"/>
</dbReference>
<dbReference type="GO" id="GO:0051287">
    <property type="term" value="F:NAD binding"/>
    <property type="evidence" value="ECO:0007669"/>
    <property type="project" value="UniProtKB-UniRule"/>
</dbReference>
<dbReference type="GO" id="GO:0050136">
    <property type="term" value="F:NADH:ubiquinone reductase (non-electrogenic) activity"/>
    <property type="evidence" value="ECO:0007669"/>
    <property type="project" value="RHEA"/>
</dbReference>
<dbReference type="GO" id="GO:0050661">
    <property type="term" value="F:NADP binding"/>
    <property type="evidence" value="ECO:0007669"/>
    <property type="project" value="UniProtKB-UniRule"/>
</dbReference>
<dbReference type="GO" id="GO:0008753">
    <property type="term" value="F:NADPH dehydrogenase (quinone) activity"/>
    <property type="evidence" value="ECO:0007669"/>
    <property type="project" value="RHEA"/>
</dbReference>
<dbReference type="FunFam" id="3.40.50.360:FF:000004">
    <property type="entry name" value="NAD(P)H dehydrogenase (quinone)"/>
    <property type="match status" value="1"/>
</dbReference>
<dbReference type="Gene3D" id="3.40.50.360">
    <property type="match status" value="1"/>
</dbReference>
<dbReference type="HAMAP" id="MF_01017">
    <property type="entry name" value="NQOR"/>
    <property type="match status" value="1"/>
</dbReference>
<dbReference type="InterPro" id="IPR008254">
    <property type="entry name" value="Flavodoxin/NO_synth"/>
</dbReference>
<dbReference type="InterPro" id="IPR029039">
    <property type="entry name" value="Flavoprotein-like_sf"/>
</dbReference>
<dbReference type="InterPro" id="IPR010089">
    <property type="entry name" value="Flavoprotein_WrbA-like"/>
</dbReference>
<dbReference type="InterPro" id="IPR005025">
    <property type="entry name" value="FMN_Rdtase-like_dom"/>
</dbReference>
<dbReference type="InterPro" id="IPR037513">
    <property type="entry name" value="NQO"/>
</dbReference>
<dbReference type="NCBIfam" id="TIGR01755">
    <property type="entry name" value="flav_wrbA"/>
    <property type="match status" value="1"/>
</dbReference>
<dbReference type="NCBIfam" id="NF002999">
    <property type="entry name" value="PRK03767.1"/>
    <property type="match status" value="1"/>
</dbReference>
<dbReference type="PANTHER" id="PTHR30546">
    <property type="entry name" value="FLAVODOXIN-RELATED PROTEIN WRBA-RELATED"/>
    <property type="match status" value="1"/>
</dbReference>
<dbReference type="PANTHER" id="PTHR30546:SF23">
    <property type="entry name" value="FLAVOPROTEIN-LIKE PROTEIN YCP4-RELATED"/>
    <property type="match status" value="1"/>
</dbReference>
<dbReference type="Pfam" id="PF03358">
    <property type="entry name" value="FMN_red"/>
    <property type="match status" value="1"/>
</dbReference>
<dbReference type="SUPFAM" id="SSF52218">
    <property type="entry name" value="Flavoproteins"/>
    <property type="match status" value="1"/>
</dbReference>
<dbReference type="PROSITE" id="PS50902">
    <property type="entry name" value="FLAVODOXIN_LIKE"/>
    <property type="match status" value="1"/>
</dbReference>
<proteinExistence type="inferred from homology"/>
<gene>
    <name type="ordered locus">E2348C_1055</name>
</gene>
<reference key="1">
    <citation type="journal article" date="2009" name="J. Bacteriol.">
        <title>Complete genome sequence and comparative genome analysis of enteropathogenic Escherichia coli O127:H6 strain E2348/69.</title>
        <authorList>
            <person name="Iguchi A."/>
            <person name="Thomson N.R."/>
            <person name="Ogura Y."/>
            <person name="Saunders D."/>
            <person name="Ooka T."/>
            <person name="Henderson I.R."/>
            <person name="Harris D."/>
            <person name="Asadulghani M."/>
            <person name="Kurokawa K."/>
            <person name="Dean P."/>
            <person name="Kenny B."/>
            <person name="Quail M.A."/>
            <person name="Thurston S."/>
            <person name="Dougan G."/>
            <person name="Hayashi T."/>
            <person name="Parkhill J."/>
            <person name="Frankel G."/>
        </authorList>
    </citation>
    <scope>NUCLEOTIDE SEQUENCE [LARGE SCALE GENOMIC DNA]</scope>
    <source>
        <strain>E2348/69 / EPEC</strain>
    </source>
</reference>
<accession>B7UNY7</accession>